<sequence length="22" mass="2500">CVQQNKKSRSARDMXXSXDALE</sequence>
<comment type="similarity">
    <text evidence="1">Belongs to the bacterial ribosomal protein bL32 family.</text>
</comment>
<accession>P84767</accession>
<accession>Q9R3F6</accession>
<protein>
    <recommendedName>
        <fullName evidence="4">Large ribosomal subunit protein bL32</fullName>
    </recommendedName>
    <alternativeName>
        <fullName>50S ribosomal protein L32</fullName>
    </alternativeName>
</protein>
<proteinExistence type="evidence at protein level"/>
<evidence type="ECO:0000255" key="1"/>
<evidence type="ECO:0000256" key="2">
    <source>
        <dbReference type="SAM" id="MobiDB-lite"/>
    </source>
</evidence>
<evidence type="ECO:0000303" key="3">
    <source>
    </source>
</evidence>
<evidence type="ECO:0000305" key="4"/>
<dbReference type="GO" id="GO:1990904">
    <property type="term" value="C:ribonucleoprotein complex"/>
    <property type="evidence" value="ECO:0007669"/>
    <property type="project" value="UniProtKB-KW"/>
</dbReference>
<dbReference type="GO" id="GO:0005840">
    <property type="term" value="C:ribosome"/>
    <property type="evidence" value="ECO:0007669"/>
    <property type="project" value="UniProtKB-KW"/>
</dbReference>
<reference evidence="4" key="1">
    <citation type="journal article" date="1995" name="Int. J. Syst. Bacteriol.">
        <title>Comparative ribosomal protein sequence analyses of a phylogenetically defined genus, Pseudomonas, and its relatives.</title>
        <authorList>
            <person name="Ochi K."/>
        </authorList>
    </citation>
    <scope>PROTEIN SEQUENCE</scope>
    <source>
        <strain>ATCC 25411 / DSM 50017 / CCUG 1781 / CIP 75.21 / JCM 5966 / NBRC 14162 / NCTC 10897 / NCIMB 10541 / VKM B-972</strain>
    </source>
</reference>
<organism>
    <name type="scientific">Ectopseudomonas mendocina</name>
    <name type="common">Pseudomonas mendocina</name>
    <dbReference type="NCBI Taxonomy" id="300"/>
    <lineage>
        <taxon>Bacteria</taxon>
        <taxon>Pseudomonadati</taxon>
        <taxon>Pseudomonadota</taxon>
        <taxon>Gammaproteobacteria</taxon>
        <taxon>Pseudomonadales</taxon>
        <taxon>Pseudomonadaceae</taxon>
        <taxon>Ectopseudomonas</taxon>
    </lineage>
</organism>
<name>RL32_ECTME</name>
<gene>
    <name type="primary">rpmF</name>
</gene>
<feature type="chain" id="PRO_0000223464" description="Large ribosomal subunit protein bL32">
    <location>
        <begin position="1"/>
        <end position="22" status="greater than"/>
    </location>
</feature>
<feature type="region of interest" description="Disordered" evidence="2">
    <location>
        <begin position="1"/>
        <end position="22"/>
    </location>
</feature>
<feature type="compositionally biased region" description="Low complexity" evidence="2">
    <location>
        <begin position="13"/>
        <end position="22"/>
    </location>
</feature>
<feature type="non-terminal residue" evidence="3">
    <location>
        <position position="22"/>
    </location>
</feature>
<keyword id="KW-0903">Direct protein sequencing</keyword>
<keyword id="KW-0687">Ribonucleoprotein</keyword>
<keyword id="KW-0689">Ribosomal protein</keyword>